<reference key="1">
    <citation type="journal article" date="1994" name="Proc. Natl. Acad. Sci. U.S.A.">
        <title>Molecular cloning of a putative vesicular transporter for acetylcholine.</title>
        <authorList>
            <person name="Roghani A."/>
            <person name="Feldman J."/>
            <person name="Kohan S.A."/>
            <person name="Shirzadi A."/>
            <person name="Gundersen C.B."/>
            <person name="Brecha N."/>
            <person name="Edwards R.H."/>
        </authorList>
    </citation>
    <scope>NUCLEOTIDE SEQUENCE [MRNA]</scope>
    <scope>TISSUE SPECIFICITY</scope>
    <source>
        <tissue>Brain stem</tissue>
    </source>
</reference>
<reference key="2">
    <citation type="journal article" date="1994" name="J. Biol. Chem.">
        <title>Functional identification of a vesicular acetylcholine transporter and its expression from a 'cholinergic' gene locus.</title>
        <authorList>
            <person name="Erickson J.D."/>
            <person name="Varoqui H."/>
            <person name="Schafer M.K.-H."/>
            <person name="Modi W."/>
            <person name="Diebler M.-F."/>
            <person name="Weihe E."/>
            <person name="Rand J.B."/>
            <person name="Eiden L.E."/>
            <person name="Bonner T.I."/>
            <person name="Usdin T.B."/>
        </authorList>
    </citation>
    <scope>NUCLEOTIDE SEQUENCE [MRNA]</scope>
    <scope>FUNCTION</scope>
    <scope>TRANSPORT ACTIVITY</scope>
    <scope>ACTIVITY REGULATION</scope>
    <scope>TISSUE SPECIFICITY</scope>
    <source>
        <tissue>Pheochromocytoma</tissue>
    </source>
</reference>
<reference key="3">
    <citation type="journal article" date="1994" name="J. Biol. Chem.">
        <title>A unique gene organization for two cholinergic markers, choline acetyltransferase and a putative vesicular transporter of acetylcholine.</title>
        <authorList>
            <person name="Bejanin S."/>
            <person name="Cervini R."/>
            <person name="Mallet J."/>
            <person name="Berrard S."/>
        </authorList>
    </citation>
    <scope>NUCLEOTIDE SEQUENCE [GENOMIC DNA]</scope>
    <scope>TISSUE SPECIFICITY</scope>
    <source>
        <strain>Sprague-Dawley</strain>
        <tissue>Spinal cord</tissue>
    </source>
</reference>
<reference key="4">
    <citation type="journal article" date="1997" name="Neuron">
        <title>Expression of a putative vesicular acetylcholine transporter facilitates quantal transmitter packaging.</title>
        <authorList>
            <person name="Song H."/>
            <person name="Ming G."/>
            <person name="Fon E."/>
            <person name="Bellocchio E."/>
            <person name="Edwards R.H."/>
            <person name="Poo M."/>
        </authorList>
    </citation>
    <scope>FUNCTION</scope>
    <scope>SUBCELLULAR LOCATION</scope>
    <scope>MUTAGENESIS OF ASP-193 AND ASP-398</scope>
    <scope>SITE</scope>
</reference>
<reference key="5">
    <citation type="journal article" date="2004" name="J. Neurochem.">
        <title>Choline is transported by vesicular acetylcholine transporter.</title>
        <authorList>
            <person name="Bravo D.T."/>
            <person name="Kolmakova N.G."/>
            <person name="Parsons S.M."/>
        </authorList>
    </citation>
    <scope>FUNCTION</scope>
    <scope>TRANSPORT ACTIVITY</scope>
    <scope>ACTIVITY REGULATION</scope>
</reference>
<name>VACHT_RAT</name>
<accession>Q62666</accession>
<accession>Q64351</accession>
<dbReference type="EMBL" id="U09838">
    <property type="protein sequence ID" value="AAA50831.1"/>
    <property type="molecule type" value="mRNA"/>
</dbReference>
<dbReference type="EMBL" id="U09211">
    <property type="protein sequence ID" value="AAA20498.1"/>
    <property type="molecule type" value="mRNA"/>
</dbReference>
<dbReference type="EMBL" id="X80395">
    <property type="protein sequence ID" value="CAA56604.1"/>
    <property type="molecule type" value="Genomic_DNA"/>
</dbReference>
<dbReference type="RefSeq" id="NP_113851.1">
    <property type="nucleotide sequence ID" value="NM_031663.2"/>
</dbReference>
<dbReference type="SMR" id="Q62666"/>
<dbReference type="FunCoup" id="Q62666">
    <property type="interactions" value="49"/>
</dbReference>
<dbReference type="STRING" id="10116.ENSRNOP00000076023"/>
<dbReference type="BindingDB" id="Q62666"/>
<dbReference type="ChEMBL" id="CHEMBL2125"/>
<dbReference type="DrugCentral" id="Q62666"/>
<dbReference type="GlyCosmos" id="Q62666">
    <property type="glycosylation" value="2 sites, No reported glycans"/>
</dbReference>
<dbReference type="GlyGen" id="Q62666">
    <property type="glycosylation" value="3 sites"/>
</dbReference>
<dbReference type="iPTMnet" id="Q62666"/>
<dbReference type="PhosphoSitePlus" id="Q62666"/>
<dbReference type="ABCD" id="Q62666">
    <property type="antibodies" value="2 sequenced antibodies"/>
</dbReference>
<dbReference type="GeneID" id="60422"/>
<dbReference type="KEGG" id="rno:60422"/>
<dbReference type="UCSC" id="RGD:62072">
    <property type="organism name" value="rat"/>
</dbReference>
<dbReference type="AGR" id="RGD:62072"/>
<dbReference type="CTD" id="6572"/>
<dbReference type="RGD" id="62072">
    <property type="gene designation" value="Slc18a3"/>
</dbReference>
<dbReference type="InParanoid" id="Q62666"/>
<dbReference type="OrthoDB" id="78610at9989"/>
<dbReference type="PhylomeDB" id="Q62666"/>
<dbReference type="Reactome" id="R-RNO-264642">
    <property type="pathway name" value="Acetylcholine Neurotransmitter Release Cycle"/>
</dbReference>
<dbReference type="Reactome" id="R-RNO-8856825">
    <property type="pathway name" value="Cargo recognition for clathrin-mediated endocytosis"/>
</dbReference>
<dbReference type="Reactome" id="R-RNO-8856828">
    <property type="pathway name" value="Clathrin-mediated endocytosis"/>
</dbReference>
<dbReference type="PRO" id="PR:Q62666"/>
<dbReference type="Proteomes" id="UP000002494">
    <property type="component" value="Unplaced"/>
</dbReference>
<dbReference type="GO" id="GO:0030121">
    <property type="term" value="C:AP-1 adaptor complex"/>
    <property type="evidence" value="ECO:0000314"/>
    <property type="project" value="RGD"/>
</dbReference>
<dbReference type="GO" id="GO:0030122">
    <property type="term" value="C:AP-2 adaptor complex"/>
    <property type="evidence" value="ECO:0000314"/>
    <property type="project" value="RGD"/>
</dbReference>
<dbReference type="GO" id="GO:0030424">
    <property type="term" value="C:axon"/>
    <property type="evidence" value="ECO:0000314"/>
    <property type="project" value="RGD"/>
</dbReference>
<dbReference type="GO" id="GO:0043679">
    <property type="term" value="C:axon terminus"/>
    <property type="evidence" value="ECO:0000314"/>
    <property type="project" value="RGD"/>
</dbReference>
<dbReference type="GO" id="GO:0098981">
    <property type="term" value="C:cholinergic synapse"/>
    <property type="evidence" value="ECO:0000314"/>
    <property type="project" value="SynGO"/>
</dbReference>
<dbReference type="GO" id="GO:0005737">
    <property type="term" value="C:cytoplasm"/>
    <property type="evidence" value="ECO:0000266"/>
    <property type="project" value="RGD"/>
</dbReference>
<dbReference type="GO" id="GO:0031594">
    <property type="term" value="C:neuromuscular junction"/>
    <property type="evidence" value="ECO:0000314"/>
    <property type="project" value="SynGO"/>
</dbReference>
<dbReference type="GO" id="GO:0043005">
    <property type="term" value="C:neuron projection"/>
    <property type="evidence" value="ECO:0000266"/>
    <property type="project" value="RGD"/>
</dbReference>
<dbReference type="GO" id="GO:0008021">
    <property type="term" value="C:synaptic vesicle"/>
    <property type="evidence" value="ECO:0000314"/>
    <property type="project" value="RGD"/>
</dbReference>
<dbReference type="GO" id="GO:0030672">
    <property type="term" value="C:synaptic vesicle membrane"/>
    <property type="evidence" value="ECO:0000314"/>
    <property type="project" value="UniProtKB"/>
</dbReference>
<dbReference type="GO" id="GO:0043195">
    <property type="term" value="C:terminal bouton"/>
    <property type="evidence" value="ECO:0000266"/>
    <property type="project" value="RGD"/>
</dbReference>
<dbReference type="GO" id="GO:0005277">
    <property type="term" value="F:acetylcholine transmembrane transporter activity"/>
    <property type="evidence" value="ECO:0000314"/>
    <property type="project" value="RGD"/>
</dbReference>
<dbReference type="GO" id="GO:0005278">
    <property type="term" value="F:acetylcholine:proton antiporter activity"/>
    <property type="evidence" value="ECO:0000314"/>
    <property type="project" value="UniProtKB"/>
</dbReference>
<dbReference type="GO" id="GO:0015311">
    <property type="term" value="F:monoamine:proton antiporter activity"/>
    <property type="evidence" value="ECO:0000266"/>
    <property type="project" value="RGD"/>
</dbReference>
<dbReference type="GO" id="GO:0015870">
    <property type="term" value="P:acetylcholine transport"/>
    <property type="evidence" value="ECO:0000315"/>
    <property type="project" value="RGD"/>
</dbReference>
<dbReference type="GO" id="GO:0051630">
    <property type="term" value="P:acetylcholine uptake"/>
    <property type="evidence" value="ECO:0000314"/>
    <property type="project" value="UniProtKB"/>
</dbReference>
<dbReference type="GO" id="GO:0007268">
    <property type="term" value="P:chemical synaptic transmission"/>
    <property type="evidence" value="ECO:0000318"/>
    <property type="project" value="GO_Central"/>
</dbReference>
<dbReference type="GO" id="GO:0098700">
    <property type="term" value="P:neurotransmitter loading into synaptic vesicle"/>
    <property type="evidence" value="ECO:0000314"/>
    <property type="project" value="SynGO"/>
</dbReference>
<dbReference type="GO" id="GO:0014057">
    <property type="term" value="P:positive regulation of acetylcholine secretion, neurotransmission"/>
    <property type="evidence" value="ECO:0000250"/>
    <property type="project" value="UniProtKB"/>
</dbReference>
<dbReference type="GO" id="GO:1900273">
    <property type="term" value="P:positive regulation of long-term synaptic potentiation"/>
    <property type="evidence" value="ECO:0000250"/>
    <property type="project" value="UniProtKB"/>
</dbReference>
<dbReference type="GO" id="GO:1904398">
    <property type="term" value="P:positive regulation of neuromuscular junction development"/>
    <property type="evidence" value="ECO:0000250"/>
    <property type="project" value="UniProtKB"/>
</dbReference>
<dbReference type="GO" id="GO:0045471">
    <property type="term" value="P:response to ethanol"/>
    <property type="evidence" value="ECO:0000270"/>
    <property type="project" value="RGD"/>
</dbReference>
<dbReference type="GO" id="GO:0051610">
    <property type="term" value="P:serotonin uptake"/>
    <property type="evidence" value="ECO:0000266"/>
    <property type="project" value="RGD"/>
</dbReference>
<dbReference type="CDD" id="cd17383">
    <property type="entry name" value="MFS_SLC18A3_VAChT"/>
    <property type="match status" value="1"/>
</dbReference>
<dbReference type="FunFam" id="1.20.1250.20:FF:000109">
    <property type="entry name" value="Putative vesicular acetylcholine transporter"/>
    <property type="match status" value="1"/>
</dbReference>
<dbReference type="Gene3D" id="1.20.1250.20">
    <property type="entry name" value="MFS general substrate transporter like domains"/>
    <property type="match status" value="1"/>
</dbReference>
<dbReference type="InterPro" id="IPR011701">
    <property type="entry name" value="MFS"/>
</dbReference>
<dbReference type="InterPro" id="IPR020846">
    <property type="entry name" value="MFS_dom"/>
</dbReference>
<dbReference type="InterPro" id="IPR036259">
    <property type="entry name" value="MFS_trans_sf"/>
</dbReference>
<dbReference type="InterPro" id="IPR050930">
    <property type="entry name" value="MFS_Vesicular_Transporter"/>
</dbReference>
<dbReference type="PANTHER" id="PTHR23506">
    <property type="entry name" value="GH10249P"/>
    <property type="match status" value="1"/>
</dbReference>
<dbReference type="PANTHER" id="PTHR23506:SF13">
    <property type="entry name" value="VESICULAR ACETYLCHOLINE TRANSPORTER"/>
    <property type="match status" value="1"/>
</dbReference>
<dbReference type="Pfam" id="PF07690">
    <property type="entry name" value="MFS_1"/>
    <property type="match status" value="1"/>
</dbReference>
<dbReference type="SUPFAM" id="SSF103473">
    <property type="entry name" value="MFS general substrate transporter"/>
    <property type="match status" value="1"/>
</dbReference>
<dbReference type="PROSITE" id="PS50850">
    <property type="entry name" value="MFS"/>
    <property type="match status" value="1"/>
</dbReference>
<organism>
    <name type="scientific">Rattus norvegicus</name>
    <name type="common">Rat</name>
    <dbReference type="NCBI Taxonomy" id="10116"/>
    <lineage>
        <taxon>Eukaryota</taxon>
        <taxon>Metazoa</taxon>
        <taxon>Chordata</taxon>
        <taxon>Craniata</taxon>
        <taxon>Vertebrata</taxon>
        <taxon>Euteleostomi</taxon>
        <taxon>Mammalia</taxon>
        <taxon>Eutheria</taxon>
        <taxon>Euarchontoglires</taxon>
        <taxon>Glires</taxon>
        <taxon>Rodentia</taxon>
        <taxon>Myomorpha</taxon>
        <taxon>Muroidea</taxon>
        <taxon>Muridae</taxon>
        <taxon>Murinae</taxon>
        <taxon>Rattus</taxon>
    </lineage>
</organism>
<keyword id="KW-0968">Cytoplasmic vesicle</keyword>
<keyword id="KW-0325">Glycoprotein</keyword>
<keyword id="KW-0472">Membrane</keyword>
<keyword id="KW-0532">Neurotransmitter transport</keyword>
<keyword id="KW-1185">Reference proteome</keyword>
<keyword id="KW-0770">Synapse</keyword>
<keyword id="KW-0812">Transmembrane</keyword>
<keyword id="KW-1133">Transmembrane helix</keyword>
<keyword id="KW-0813">Transport</keyword>
<sequence length="530" mass="56537">MEPTAPTGQARAAATKLSEAVGAALQEPQRQRRLVLVIVCVALLLDNMLYMVIVPIVPDYIAHMRGGSEGPTLVSEVWEPTLPPPTLANASAYLANTSASPTAAGSARSILRPRYPTESEDVKIGVLFASKAILQLLVNPLSGPFIDRMSYDVPLLIGLGVMFASTVMFAFAEDYATLFAARSLQGLGSAFADTSGIAMIADKYPEEPERSRALGVALAFISFGSLVAPPFGGILYEFAGKRVPFLVLAAVSLFDALLLLAVAKPFSAAARARANLPVGTPIHRLMLDPYIAVVAGALTTCNIPLAFLEPTIATWMKHTMAASEWEMGMVWLPAFVPHVLGVYLTVRLAARYPHLQWLYGALGLAVIGVSSCVVPACRSFAPLVVSLCGLCFGIALVDTALLPTLAFLVDVRHVSVYGSVYAIADISYSVAYALGPIVAGHIVHSLGFEQLSLGMGLANLLYAPVLLLLRNVGLLTRSRSERDVLLDEPPQGLYDAVRLREVQGKDGGEPCSPPGPFDGCEDDYNYYSRS</sequence>
<evidence type="ECO:0000250" key="1">
    <source>
        <dbReference type="UniProtKB" id="O35304"/>
    </source>
</evidence>
<evidence type="ECO:0000250" key="2">
    <source>
        <dbReference type="UniProtKB" id="Q16572"/>
    </source>
</evidence>
<evidence type="ECO:0000255" key="3"/>
<evidence type="ECO:0000256" key="4">
    <source>
        <dbReference type="SAM" id="MobiDB-lite"/>
    </source>
</evidence>
<evidence type="ECO:0000269" key="5">
    <source>
    </source>
</evidence>
<evidence type="ECO:0000269" key="6">
    <source>
    </source>
</evidence>
<evidence type="ECO:0000269" key="7">
    <source>
    </source>
</evidence>
<evidence type="ECO:0000269" key="8">
    <source>
    </source>
</evidence>
<evidence type="ECO:0000269" key="9">
    <source>
    </source>
</evidence>
<evidence type="ECO:0000305" key="10"/>
<evidence type="ECO:0000305" key="11">
    <source>
    </source>
</evidence>
<evidence type="ECO:0000305" key="12">
    <source>
    </source>
</evidence>
<feature type="chain" id="PRO_0000127520" description="Vesicular acetylcholine transporter">
    <location>
        <begin position="1"/>
        <end position="530"/>
    </location>
</feature>
<feature type="topological domain" description="Cytoplasmic" evidence="3">
    <location>
        <begin position="1"/>
        <end position="33"/>
    </location>
</feature>
<feature type="transmembrane region" description="Helical" evidence="3">
    <location>
        <begin position="34"/>
        <end position="54"/>
    </location>
</feature>
<feature type="topological domain" description="Lumenal, vesicle" evidence="3">
    <location>
        <begin position="55"/>
        <end position="125"/>
    </location>
</feature>
<feature type="transmembrane region" description="Helical" evidence="3">
    <location>
        <begin position="126"/>
        <end position="146"/>
    </location>
</feature>
<feature type="topological domain" description="Cytoplasmic" evidence="3">
    <location>
        <begin position="147"/>
        <end position="152"/>
    </location>
</feature>
<feature type="transmembrane region" description="Helical" evidence="3">
    <location>
        <begin position="153"/>
        <end position="173"/>
    </location>
</feature>
<feature type="topological domain" description="Lumenal, vesicle" evidence="3">
    <location>
        <begin position="174"/>
        <end position="182"/>
    </location>
</feature>
<feature type="transmembrane region" description="Helical" evidence="3">
    <location>
        <begin position="183"/>
        <end position="203"/>
    </location>
</feature>
<feature type="topological domain" description="Cytoplasmic" evidence="3">
    <location>
        <begin position="204"/>
        <end position="213"/>
    </location>
</feature>
<feature type="transmembrane region" description="Helical" evidence="3">
    <location>
        <begin position="214"/>
        <end position="234"/>
    </location>
</feature>
<feature type="topological domain" description="Lumenal, vesicle" evidence="3">
    <location>
        <begin position="235"/>
        <end position="242"/>
    </location>
</feature>
<feature type="transmembrane region" description="Helical" evidence="3">
    <location>
        <begin position="243"/>
        <end position="263"/>
    </location>
</feature>
<feature type="topological domain" description="Cytoplasmic" evidence="3">
    <location>
        <begin position="264"/>
        <end position="289"/>
    </location>
</feature>
<feature type="transmembrane region" description="Helical" evidence="3">
    <location>
        <begin position="290"/>
        <end position="310"/>
    </location>
</feature>
<feature type="topological domain" description="Lumenal, vesicle" evidence="3">
    <location>
        <begin position="311"/>
        <end position="325"/>
    </location>
</feature>
<feature type="transmembrane region" description="Helical" evidence="3">
    <location>
        <begin position="326"/>
        <end position="346"/>
    </location>
</feature>
<feature type="topological domain" description="Cytoplasmic" evidence="3">
    <location>
        <begin position="347"/>
        <end position="356"/>
    </location>
</feature>
<feature type="transmembrane region" description="Helical" evidence="3">
    <location>
        <begin position="357"/>
        <end position="377"/>
    </location>
</feature>
<feature type="topological domain" description="Lumenal, vesicle" evidence="3">
    <location>
        <begin position="378"/>
        <end position="388"/>
    </location>
</feature>
<feature type="transmembrane region" description="Helical" evidence="3">
    <location>
        <begin position="389"/>
        <end position="409"/>
    </location>
</feature>
<feature type="topological domain" description="Cytoplasmic" evidence="3">
    <location>
        <begin position="410"/>
        <end position="422"/>
    </location>
</feature>
<feature type="transmembrane region" description="Helical" evidence="3">
    <location>
        <begin position="423"/>
        <end position="443"/>
    </location>
</feature>
<feature type="topological domain" description="Lumenal, vesicle" evidence="3">
    <location>
        <begin position="444"/>
        <end position="447"/>
    </location>
</feature>
<feature type="transmembrane region" description="Helical" evidence="3">
    <location>
        <begin position="448"/>
        <end position="468"/>
    </location>
</feature>
<feature type="topological domain" description="Cytoplasmic" evidence="3">
    <location>
        <begin position="469"/>
        <end position="530"/>
    </location>
</feature>
<feature type="region of interest" description="Mediates interaction with SEC14L1" evidence="1">
    <location>
        <begin position="471"/>
        <end position="530"/>
    </location>
</feature>
<feature type="region of interest" description="Disordered" evidence="4">
    <location>
        <begin position="504"/>
        <end position="530"/>
    </location>
</feature>
<feature type="site" description="Important for transporter activity" evidence="9">
    <location>
        <position position="193"/>
    </location>
</feature>
<feature type="site" description="Important for transporter activity" evidence="9">
    <location>
        <position position="398"/>
    </location>
</feature>
<feature type="glycosylation site" description="N-linked (GlcNAc...) asparagine" evidence="3">
    <location>
        <position position="89"/>
    </location>
</feature>
<feature type="glycosylation site" description="N-linked (GlcNAc...) asparagine" evidence="3">
    <location>
        <position position="96"/>
    </location>
</feature>
<feature type="mutagenesis site" description="Loss of activity." evidence="9">
    <original>D</original>
    <variation>N</variation>
    <location>
        <position position="193"/>
    </location>
</feature>
<feature type="mutagenesis site" description="Loss of activity." evidence="9">
    <original>D</original>
    <variation>N</variation>
    <location>
        <position position="398"/>
    </location>
</feature>
<feature type="sequence conflict" description="In Ref. 1; AAA50831." evidence="10" ref="1">
    <original>A</original>
    <variation>T</variation>
    <location>
        <position position="92"/>
    </location>
</feature>
<gene>
    <name type="primary">Slc18a3</name>
    <name type="synonym">Vacht</name>
    <name type="synonym">Vat</name>
</gene>
<proteinExistence type="evidence at protein level"/>
<comment type="function">
    <text evidence="1 2 5 7 9">Electrogenic antiporter that exchanges one cholinergic neurotransmitter, acetylcholine or choline, with two intravesicular protons across the membrane of synaptic vesicles. Uses the electrochemical proton gradient established by the V-type proton-pump ATPase to store neurotransmitters inside the vesicles prior to their release via exocytosis (PubMed:15485505, PubMed:8071310). Determines cholinergic vesicular quantal size at presynaptic nerve terminals in developing neuro-muscular junctions with an impact on motor neuron differentiation and innervation pattern (PubMed:9182805). Part of forebrain cholinergic system, regulates hippocampal synapse transmissions that underlie spatial memory formation (By similarity). Can transport serotonin.</text>
</comment>
<comment type="catalytic activity">
    <reaction evidence="5 7">
        <text>acetylcholine(out) + 2 H(+)(in) = acetylcholine(in) + 2 H(+)(out)</text>
        <dbReference type="Rhea" id="RHEA:72891"/>
        <dbReference type="ChEBI" id="CHEBI:15355"/>
        <dbReference type="ChEBI" id="CHEBI:15378"/>
    </reaction>
    <physiologicalReaction direction="left-to-right" evidence="11 12">
        <dbReference type="Rhea" id="RHEA:72892"/>
    </physiologicalReaction>
</comment>
<comment type="catalytic activity">
    <reaction evidence="5">
        <text>choline(in) + 2 H(+)(out) = choline(out) + 2 H(+)(in)</text>
        <dbReference type="Rhea" id="RHEA:73819"/>
        <dbReference type="ChEBI" id="CHEBI:15354"/>
        <dbReference type="ChEBI" id="CHEBI:15378"/>
    </reaction>
    <physiologicalReaction direction="left-to-right" evidence="11">
        <dbReference type="Rhea" id="RHEA:73820"/>
    </physiologicalReaction>
</comment>
<comment type="catalytic activity">
    <reaction evidence="2">
        <text>serotonin(in) + 2 H(+)(out) = serotonin(out) + 2 H(+)(in)</text>
        <dbReference type="Rhea" id="RHEA:73743"/>
        <dbReference type="ChEBI" id="CHEBI:15378"/>
        <dbReference type="ChEBI" id="CHEBI:350546"/>
    </reaction>
</comment>
<comment type="activity regulation">
    <text evidence="5 7">Potently inhibited by L-vesamicol.</text>
</comment>
<comment type="subunit">
    <text evidence="2">Interacts with SEC14L1.</text>
</comment>
<comment type="subcellular location">
    <subcellularLocation>
        <location evidence="9">Cytoplasmic vesicle</location>
        <location evidence="9">Secretory vesicle</location>
        <location evidence="9">Synaptic vesicle membrane</location>
        <topology evidence="3">Multi-pass membrane protein</topology>
    </subcellularLocation>
</comment>
<comment type="tissue specificity">
    <text evidence="6 7 8">High expression in all major cholinergic cell groups, including peripheral postganglionic parasympathetic cells, preganglionic sympathetic and parasympathetic cells, ventral spinal cord and brainstem motoneurons, cell groups in the basal forebrain, the habenula and the corpus striatum. Weakly expressed in the cortex and hippocampus.</text>
</comment>
<comment type="similarity">
    <text evidence="10">Belongs to the major facilitator superfamily. Vesicular transporter family.</text>
</comment>
<protein>
    <recommendedName>
        <fullName>Vesicular acetylcholine transporter</fullName>
        <shortName>VAChT</shortName>
        <shortName>rVAT</shortName>
    </recommendedName>
    <alternativeName>
        <fullName>Solute carrier family 18 member 3</fullName>
    </alternativeName>
</protein>